<dbReference type="EMBL" id="L06064">
    <property type="protein sequence ID" value="AAA16902.1"/>
    <property type="molecule type" value="mRNA"/>
</dbReference>
<dbReference type="PIR" id="A37952">
    <property type="entry name" value="A37952"/>
</dbReference>
<dbReference type="SMR" id="Q02777"/>
<dbReference type="GO" id="GO:0090575">
    <property type="term" value="C:RNA polymerase II transcription regulator complex"/>
    <property type="evidence" value="ECO:0007669"/>
    <property type="project" value="TreeGrafter"/>
</dbReference>
<dbReference type="GO" id="GO:0004879">
    <property type="term" value="F:nuclear receptor activity"/>
    <property type="evidence" value="ECO:0000250"/>
    <property type="project" value="UniProtKB"/>
</dbReference>
<dbReference type="GO" id="GO:0000978">
    <property type="term" value="F:RNA polymerase II cis-regulatory region sequence-specific DNA binding"/>
    <property type="evidence" value="ECO:0007669"/>
    <property type="project" value="TreeGrafter"/>
</dbReference>
<dbReference type="GO" id="GO:0070324">
    <property type="term" value="F:thyroid hormone binding"/>
    <property type="evidence" value="ECO:0000250"/>
    <property type="project" value="UniProtKB"/>
</dbReference>
<dbReference type="GO" id="GO:0008270">
    <property type="term" value="F:zinc ion binding"/>
    <property type="evidence" value="ECO:0007669"/>
    <property type="project" value="UniProtKB-KW"/>
</dbReference>
<dbReference type="GO" id="GO:0030154">
    <property type="term" value="P:cell differentiation"/>
    <property type="evidence" value="ECO:0007669"/>
    <property type="project" value="TreeGrafter"/>
</dbReference>
<dbReference type="GO" id="GO:0000122">
    <property type="term" value="P:negative regulation of transcription by RNA polymerase II"/>
    <property type="evidence" value="ECO:0007669"/>
    <property type="project" value="TreeGrafter"/>
</dbReference>
<dbReference type="GO" id="GO:0045944">
    <property type="term" value="P:positive regulation of transcription by RNA polymerase II"/>
    <property type="evidence" value="ECO:0007669"/>
    <property type="project" value="TreeGrafter"/>
</dbReference>
<dbReference type="GO" id="GO:0048384">
    <property type="term" value="P:retinoic acid receptor signaling pathway"/>
    <property type="evidence" value="ECO:0007669"/>
    <property type="project" value="TreeGrafter"/>
</dbReference>
<dbReference type="GO" id="GO:0002154">
    <property type="term" value="P:thyroid hormone receptor signaling pathway"/>
    <property type="evidence" value="ECO:0007669"/>
    <property type="project" value="TreeGrafter"/>
</dbReference>
<dbReference type="CDD" id="cd06961">
    <property type="entry name" value="NR_DBD_TR"/>
    <property type="match status" value="1"/>
</dbReference>
<dbReference type="CDD" id="cd06935">
    <property type="entry name" value="NR_LBD_TR"/>
    <property type="match status" value="1"/>
</dbReference>
<dbReference type="FunFam" id="1.10.565.10:FF:000006">
    <property type="entry name" value="Thyroid hormone receptor beta 2"/>
    <property type="match status" value="1"/>
</dbReference>
<dbReference type="FunFam" id="3.30.50.10:FF:000011">
    <property type="entry name" value="Thyroid hormone receptor beta isoform"/>
    <property type="match status" value="1"/>
</dbReference>
<dbReference type="Gene3D" id="3.30.50.10">
    <property type="entry name" value="Erythroid Transcription Factor GATA-1, subunit A"/>
    <property type="match status" value="1"/>
</dbReference>
<dbReference type="Gene3D" id="1.10.565.10">
    <property type="entry name" value="Retinoid X Receptor"/>
    <property type="match status" value="1"/>
</dbReference>
<dbReference type="InterPro" id="IPR035500">
    <property type="entry name" value="NHR-like_dom_sf"/>
</dbReference>
<dbReference type="InterPro" id="IPR000536">
    <property type="entry name" value="Nucl_hrmn_rcpt_lig-bd"/>
</dbReference>
<dbReference type="InterPro" id="IPR050234">
    <property type="entry name" value="Nuclear_hormone_rcpt_NR1"/>
</dbReference>
<dbReference type="InterPro" id="IPR001723">
    <property type="entry name" value="Nuclear_hrmn_rcpt"/>
</dbReference>
<dbReference type="InterPro" id="IPR001728">
    <property type="entry name" value="ThyrH_rcpt"/>
</dbReference>
<dbReference type="InterPro" id="IPR001628">
    <property type="entry name" value="Znf_hrmn_rcpt"/>
</dbReference>
<dbReference type="InterPro" id="IPR013088">
    <property type="entry name" value="Znf_NHR/GATA"/>
</dbReference>
<dbReference type="PANTHER" id="PTHR24082">
    <property type="entry name" value="NUCLEAR HORMONE RECEPTOR"/>
    <property type="match status" value="1"/>
</dbReference>
<dbReference type="PANTHER" id="PTHR24082:SF42">
    <property type="entry name" value="THYROID HORMONE RECEPTOR ALPHA"/>
    <property type="match status" value="1"/>
</dbReference>
<dbReference type="Pfam" id="PF00104">
    <property type="entry name" value="Hormone_recep"/>
    <property type="match status" value="1"/>
</dbReference>
<dbReference type="Pfam" id="PF00105">
    <property type="entry name" value="zf-C4"/>
    <property type="match status" value="1"/>
</dbReference>
<dbReference type="PRINTS" id="PR00398">
    <property type="entry name" value="STRDHORMONER"/>
</dbReference>
<dbReference type="PRINTS" id="PR00047">
    <property type="entry name" value="STROIDFINGER"/>
</dbReference>
<dbReference type="PRINTS" id="PR00546">
    <property type="entry name" value="THYROIDHORMR"/>
</dbReference>
<dbReference type="SMART" id="SM00430">
    <property type="entry name" value="HOLI"/>
    <property type="match status" value="1"/>
</dbReference>
<dbReference type="SMART" id="SM00399">
    <property type="entry name" value="ZnF_C4"/>
    <property type="match status" value="1"/>
</dbReference>
<dbReference type="SUPFAM" id="SSF57716">
    <property type="entry name" value="Glucocorticoid receptor-like (DNA-binding domain)"/>
    <property type="match status" value="1"/>
</dbReference>
<dbReference type="SUPFAM" id="SSF48508">
    <property type="entry name" value="Nuclear receptor ligand-binding domain"/>
    <property type="match status" value="1"/>
</dbReference>
<dbReference type="PROSITE" id="PS51843">
    <property type="entry name" value="NR_LBD"/>
    <property type="match status" value="1"/>
</dbReference>
<dbReference type="PROSITE" id="PS00031">
    <property type="entry name" value="NUCLEAR_REC_DBD_1"/>
    <property type="match status" value="1"/>
</dbReference>
<dbReference type="PROSITE" id="PS51030">
    <property type="entry name" value="NUCLEAR_REC_DBD_2"/>
    <property type="match status" value="1"/>
</dbReference>
<sequence>MDQNLSGLDCLSEPDEKRWPDGKRKRKNSQCMGKSGMSGDSSVSLLSAGYIPSYLTKDEPCVVCSDKATGYHYRCITCEGCKGFFRRTIQKNLHPSYSCKYDGCCIIDKITRNQCQLCRFKKCIAVGMAMDLVLDDSKRVAKRKLIEENRERRRKEEMIKTLQQRPEPSSEEWELIRIVTEAHRSTNAQGSHWKQRRKFLPEDIGQNPMASMPDSDKVDLEAFSEFTKIITPAITRVVDFAKKLPMFSELPCEDQIILLKGCCMEIMSLRAAVRYDPDSETLTLSGEMAVKREQLKNGGLGVVSDAIFDLGRSLSAFNLDDTEVALLQAVLLMSSDRTGLICTDKIEKCQETYLLAFEHYINHRKHNIPHFWPKLLMKVTDLRMIGACHASRFLHMKVECPTELFPPLFLEVFEDQEV</sequence>
<evidence type="ECO:0000250" key="1"/>
<evidence type="ECO:0000250" key="2">
    <source>
        <dbReference type="UniProtKB" id="P10827"/>
    </source>
</evidence>
<evidence type="ECO:0000250" key="3">
    <source>
        <dbReference type="UniProtKB" id="P10828"/>
    </source>
</evidence>
<evidence type="ECO:0000255" key="4">
    <source>
        <dbReference type="PROSITE-ProRule" id="PRU00407"/>
    </source>
</evidence>
<evidence type="ECO:0000255" key="5">
    <source>
        <dbReference type="PROSITE-ProRule" id="PRU01189"/>
    </source>
</evidence>
<evidence type="ECO:0000256" key="6">
    <source>
        <dbReference type="SAM" id="MobiDB-lite"/>
    </source>
</evidence>
<evidence type="ECO:0000305" key="7"/>
<comment type="function">
    <text>Nuclear hormone receptor that can act as a repressor or activator of transcription. High affinity receptor for thyroid hormones, including triiodothyronine and thyroxine.</text>
</comment>
<comment type="subcellular location">
    <subcellularLocation>
        <location>Nucleus</location>
    </subcellularLocation>
</comment>
<comment type="tissue specificity">
    <text>Highest level of expression in erythrocytes. Also expressed in liver, tail, eye, muscle and skin.</text>
</comment>
<comment type="developmental stage">
    <text>Expression is low at stage XII of tadpole development, greatly increases by stage XIX, decreases thereafter and is relatively low by stage XXIV, when metamorphosis is almost complete.</text>
</comment>
<comment type="induction">
    <text>By thyroid hormone.</text>
</comment>
<comment type="domain">
    <text>Composed of three domains: a modulating N-terminal domain, a DNA-binding domain and a C-terminal ligand-binding domain.</text>
</comment>
<comment type="similarity">
    <text evidence="7">Belongs to the nuclear hormone receptor family. NR1 subfamily.</text>
</comment>
<feature type="chain" id="PRO_0000053442" description="Thyroid hormone receptor alpha">
    <location>
        <begin position="1"/>
        <end position="418"/>
    </location>
</feature>
<feature type="domain" description="NR LBD" evidence="5">
    <location>
        <begin position="171"/>
        <end position="415"/>
    </location>
</feature>
<feature type="DNA-binding region" description="Nuclear receptor" evidence="4">
    <location>
        <begin position="61"/>
        <end position="135"/>
    </location>
</feature>
<feature type="zinc finger region" description="NR C4-type" evidence="4">
    <location>
        <begin position="61"/>
        <end position="81"/>
    </location>
</feature>
<feature type="zinc finger region" description="NR C4-type" evidence="4">
    <location>
        <begin position="99"/>
        <end position="123"/>
    </location>
</feature>
<feature type="region of interest" description="Modulating" evidence="1">
    <location>
        <begin position="1"/>
        <end position="60"/>
    </location>
</feature>
<feature type="region of interest" description="Disordered" evidence="6">
    <location>
        <begin position="1"/>
        <end position="41"/>
    </location>
</feature>
<feature type="binding site" evidence="3">
    <location>
        <position position="61"/>
    </location>
    <ligand>
        <name>Zn(2+)</name>
        <dbReference type="ChEBI" id="CHEBI:29105"/>
        <label>1</label>
    </ligand>
</feature>
<feature type="binding site" evidence="3">
    <location>
        <position position="64"/>
    </location>
    <ligand>
        <name>Zn(2+)</name>
        <dbReference type="ChEBI" id="CHEBI:29105"/>
        <label>1</label>
    </ligand>
</feature>
<feature type="binding site" evidence="3">
    <location>
        <position position="78"/>
    </location>
    <ligand>
        <name>Zn(2+)</name>
        <dbReference type="ChEBI" id="CHEBI:29105"/>
        <label>1</label>
    </ligand>
</feature>
<feature type="binding site" evidence="3">
    <location>
        <position position="81"/>
    </location>
    <ligand>
        <name>Zn(2+)</name>
        <dbReference type="ChEBI" id="CHEBI:29105"/>
        <label>1</label>
    </ligand>
</feature>
<feature type="binding site" evidence="3">
    <location>
        <position position="99"/>
    </location>
    <ligand>
        <name>Zn(2+)</name>
        <dbReference type="ChEBI" id="CHEBI:29105"/>
        <label>2</label>
    </ligand>
</feature>
<feature type="binding site" evidence="3">
    <location>
        <position position="105"/>
    </location>
    <ligand>
        <name>Zn(2+)</name>
        <dbReference type="ChEBI" id="CHEBI:29105"/>
        <label>2</label>
    </ligand>
</feature>
<feature type="binding site" evidence="3">
    <location>
        <position position="115"/>
    </location>
    <ligand>
        <name>Zn(2+)</name>
        <dbReference type="ChEBI" id="CHEBI:29105"/>
        <label>2</label>
    </ligand>
</feature>
<feature type="binding site" evidence="3">
    <location>
        <position position="118"/>
    </location>
    <ligand>
        <name>Zn(2+)</name>
        <dbReference type="ChEBI" id="CHEBI:29105"/>
        <label>2</label>
    </ligand>
</feature>
<feature type="binding site" evidence="2">
    <location>
        <position position="236"/>
    </location>
    <ligand>
        <name>3,3',5-triiodo-L-thyronine</name>
        <dbReference type="ChEBI" id="CHEBI:533015"/>
    </ligand>
</feature>
<feature type="binding site" evidence="2">
    <location>
        <position position="285"/>
    </location>
    <ligand>
        <name>3,3',5-triiodo-L-thyronine</name>
        <dbReference type="ChEBI" id="CHEBI:533015"/>
    </ligand>
</feature>
<accession>Q02777</accession>
<gene>
    <name type="primary">thra</name>
    <name type="synonym">nr1a1</name>
</gene>
<keyword id="KW-0238">DNA-binding</keyword>
<keyword id="KW-0479">Metal-binding</keyword>
<keyword id="KW-0539">Nucleus</keyword>
<keyword id="KW-0675">Receptor</keyword>
<keyword id="KW-0804">Transcription</keyword>
<keyword id="KW-0805">Transcription regulation</keyword>
<keyword id="KW-0862">Zinc</keyword>
<keyword id="KW-0863">Zinc-finger</keyword>
<organism>
    <name type="scientific">Aquarana catesbeiana</name>
    <name type="common">American bullfrog</name>
    <name type="synonym">Rana catesbeiana</name>
    <dbReference type="NCBI Taxonomy" id="8400"/>
    <lineage>
        <taxon>Eukaryota</taxon>
        <taxon>Metazoa</taxon>
        <taxon>Chordata</taxon>
        <taxon>Craniata</taxon>
        <taxon>Vertebrata</taxon>
        <taxon>Euteleostomi</taxon>
        <taxon>Amphibia</taxon>
        <taxon>Batrachia</taxon>
        <taxon>Anura</taxon>
        <taxon>Neobatrachia</taxon>
        <taxon>Ranoidea</taxon>
        <taxon>Ranidae</taxon>
        <taxon>Aquarana</taxon>
    </lineage>
</organism>
<proteinExistence type="evidence at transcript level"/>
<protein>
    <recommendedName>
        <fullName>Thyroid hormone receptor alpha</fullName>
    </recommendedName>
    <alternativeName>
        <fullName>Nuclear receptor subfamily 1 group A member 1</fullName>
    </alternativeName>
</protein>
<name>THA_AQUCT</name>
<reference key="1">
    <citation type="journal article" date="1993" name="Endocrinology">
        <title>Rana catesbeiana tadpole red blood cells express an alpha, but not a beta, c-erbA gene.</title>
        <authorList>
            <person name="Schneider M.J."/>
            <person name="Davey J.C."/>
            <person name="Galton V.A."/>
        </authorList>
    </citation>
    <scope>NUCLEOTIDE SEQUENCE [MRNA]</scope>
    <source>
        <tissue>Tadpole tail</tissue>
    </source>
</reference>
<reference key="2">
    <citation type="journal article" date="1991" name="Mol. Endocrinol.">
        <title>Regulation of c-erbA-alpha messenger RNA species in tadpole erythrocytes by thyroid hormone.</title>
        <authorList>
            <person name="Schneider M.J."/>
            <person name="Galton V.A."/>
        </authorList>
    </citation>
    <scope>NUCLEOTIDE SEQUENCE [MRNA] OF 77-418</scope>
    <source>
        <tissue>Erythrocyte</tissue>
    </source>
</reference>